<accession>Q1RIB3</accession>
<gene>
    <name evidence="1" type="primary">asd</name>
    <name type="ordered locus">RBE_0820</name>
</gene>
<organism>
    <name type="scientific">Rickettsia bellii (strain RML369-C)</name>
    <dbReference type="NCBI Taxonomy" id="336407"/>
    <lineage>
        <taxon>Bacteria</taxon>
        <taxon>Pseudomonadati</taxon>
        <taxon>Pseudomonadota</taxon>
        <taxon>Alphaproteobacteria</taxon>
        <taxon>Rickettsiales</taxon>
        <taxon>Rickettsiaceae</taxon>
        <taxon>Rickettsieae</taxon>
        <taxon>Rickettsia</taxon>
        <taxon>belli group</taxon>
    </lineage>
</organism>
<reference key="1">
    <citation type="journal article" date="2006" name="PLoS Genet.">
        <title>Genome sequence of Rickettsia bellii illuminates the role of amoebae in gene exchanges between intracellular pathogens.</title>
        <authorList>
            <person name="Ogata H."/>
            <person name="La Scola B."/>
            <person name="Audic S."/>
            <person name="Renesto P."/>
            <person name="Blanc G."/>
            <person name="Robert C."/>
            <person name="Fournier P.-E."/>
            <person name="Claverie J.-M."/>
            <person name="Raoult D."/>
        </authorList>
    </citation>
    <scope>NUCLEOTIDE SEQUENCE [LARGE SCALE GENOMIC DNA]</scope>
    <source>
        <strain>RML369-C</strain>
    </source>
</reference>
<protein>
    <recommendedName>
        <fullName evidence="1">Aspartate-semialdehyde dehydrogenase</fullName>
        <shortName evidence="1">ASA dehydrogenase</shortName>
        <shortName evidence="1">ASADH</shortName>
        <ecNumber evidence="1">1.2.1.11</ecNumber>
    </recommendedName>
    <alternativeName>
        <fullName evidence="1">Aspartate-beta-semialdehyde dehydrogenase</fullName>
    </alternativeName>
</protein>
<comment type="function">
    <text evidence="1">Catalyzes the NADPH-dependent formation of L-aspartate-semialdehyde (L-ASA) by the reductive dephosphorylation of L-aspartyl-4-phosphate.</text>
</comment>
<comment type="catalytic activity">
    <reaction evidence="1">
        <text>L-aspartate 4-semialdehyde + phosphate + NADP(+) = 4-phospho-L-aspartate + NADPH + H(+)</text>
        <dbReference type="Rhea" id="RHEA:24284"/>
        <dbReference type="ChEBI" id="CHEBI:15378"/>
        <dbReference type="ChEBI" id="CHEBI:43474"/>
        <dbReference type="ChEBI" id="CHEBI:57535"/>
        <dbReference type="ChEBI" id="CHEBI:57783"/>
        <dbReference type="ChEBI" id="CHEBI:58349"/>
        <dbReference type="ChEBI" id="CHEBI:537519"/>
        <dbReference type="EC" id="1.2.1.11"/>
    </reaction>
</comment>
<comment type="pathway">
    <text evidence="1">Amino-acid biosynthesis; L-lysine biosynthesis via DAP pathway; (S)-tetrahydrodipicolinate from L-aspartate: step 2/4.</text>
</comment>
<comment type="pathway">
    <text evidence="1">Amino-acid biosynthesis; L-methionine biosynthesis via de novo pathway; L-homoserine from L-aspartate: step 2/3.</text>
</comment>
<comment type="pathway">
    <text evidence="1">Amino-acid biosynthesis; L-threonine biosynthesis; L-threonine from L-aspartate: step 2/5.</text>
</comment>
<comment type="subunit">
    <text evidence="1">Homodimer.</text>
</comment>
<comment type="similarity">
    <text evidence="1">Belongs to the aspartate-semialdehyde dehydrogenase family.</text>
</comment>
<keyword id="KW-0028">Amino-acid biosynthesis</keyword>
<keyword id="KW-0220">Diaminopimelate biosynthesis</keyword>
<keyword id="KW-0457">Lysine biosynthesis</keyword>
<keyword id="KW-0486">Methionine biosynthesis</keyword>
<keyword id="KW-0521">NADP</keyword>
<keyword id="KW-0560">Oxidoreductase</keyword>
<keyword id="KW-0791">Threonine biosynthesis</keyword>
<dbReference type="EC" id="1.2.1.11" evidence="1"/>
<dbReference type="EMBL" id="CP000087">
    <property type="protein sequence ID" value="ABE04901.1"/>
    <property type="molecule type" value="Genomic_DNA"/>
</dbReference>
<dbReference type="RefSeq" id="WP_011477488.1">
    <property type="nucleotide sequence ID" value="NC_007940.1"/>
</dbReference>
<dbReference type="SMR" id="Q1RIB3"/>
<dbReference type="KEGG" id="rbe:RBE_0820"/>
<dbReference type="eggNOG" id="COG0136">
    <property type="taxonomic scope" value="Bacteria"/>
</dbReference>
<dbReference type="HOGENOM" id="CLU_049966_0_1_5"/>
<dbReference type="OrthoDB" id="9805684at2"/>
<dbReference type="UniPathway" id="UPA00034">
    <property type="reaction ID" value="UER00016"/>
</dbReference>
<dbReference type="UniPathway" id="UPA00050">
    <property type="reaction ID" value="UER00463"/>
</dbReference>
<dbReference type="UniPathway" id="UPA00051">
    <property type="reaction ID" value="UER00464"/>
</dbReference>
<dbReference type="Proteomes" id="UP000001951">
    <property type="component" value="Chromosome"/>
</dbReference>
<dbReference type="GO" id="GO:0004073">
    <property type="term" value="F:aspartate-semialdehyde dehydrogenase activity"/>
    <property type="evidence" value="ECO:0007669"/>
    <property type="project" value="UniProtKB-UniRule"/>
</dbReference>
<dbReference type="GO" id="GO:0051287">
    <property type="term" value="F:NAD binding"/>
    <property type="evidence" value="ECO:0007669"/>
    <property type="project" value="InterPro"/>
</dbReference>
<dbReference type="GO" id="GO:0050661">
    <property type="term" value="F:NADP binding"/>
    <property type="evidence" value="ECO:0007669"/>
    <property type="project" value="UniProtKB-UniRule"/>
</dbReference>
<dbReference type="GO" id="GO:0046983">
    <property type="term" value="F:protein dimerization activity"/>
    <property type="evidence" value="ECO:0007669"/>
    <property type="project" value="InterPro"/>
</dbReference>
<dbReference type="GO" id="GO:0071266">
    <property type="term" value="P:'de novo' L-methionine biosynthetic process"/>
    <property type="evidence" value="ECO:0007669"/>
    <property type="project" value="UniProtKB-UniRule"/>
</dbReference>
<dbReference type="GO" id="GO:0019877">
    <property type="term" value="P:diaminopimelate biosynthetic process"/>
    <property type="evidence" value="ECO:0007669"/>
    <property type="project" value="UniProtKB-UniRule"/>
</dbReference>
<dbReference type="GO" id="GO:0009097">
    <property type="term" value="P:isoleucine biosynthetic process"/>
    <property type="evidence" value="ECO:0007669"/>
    <property type="project" value="InterPro"/>
</dbReference>
<dbReference type="GO" id="GO:0009089">
    <property type="term" value="P:lysine biosynthetic process via diaminopimelate"/>
    <property type="evidence" value="ECO:0007669"/>
    <property type="project" value="UniProtKB-UniRule"/>
</dbReference>
<dbReference type="GO" id="GO:0009088">
    <property type="term" value="P:threonine biosynthetic process"/>
    <property type="evidence" value="ECO:0007669"/>
    <property type="project" value="UniProtKB-UniRule"/>
</dbReference>
<dbReference type="CDD" id="cd18131">
    <property type="entry name" value="ASADH_C_bac_euk_like"/>
    <property type="match status" value="1"/>
</dbReference>
<dbReference type="CDD" id="cd02316">
    <property type="entry name" value="VcASADH2_like_N"/>
    <property type="match status" value="1"/>
</dbReference>
<dbReference type="Gene3D" id="3.30.360.10">
    <property type="entry name" value="Dihydrodipicolinate Reductase, domain 2"/>
    <property type="match status" value="1"/>
</dbReference>
<dbReference type="Gene3D" id="3.40.50.720">
    <property type="entry name" value="NAD(P)-binding Rossmann-like Domain"/>
    <property type="match status" value="1"/>
</dbReference>
<dbReference type="HAMAP" id="MF_02121">
    <property type="entry name" value="ASADH"/>
    <property type="match status" value="1"/>
</dbReference>
<dbReference type="InterPro" id="IPR012080">
    <property type="entry name" value="Asp_semialdehyde_DH"/>
</dbReference>
<dbReference type="InterPro" id="IPR005986">
    <property type="entry name" value="Asp_semialdehyde_DH_beta"/>
</dbReference>
<dbReference type="InterPro" id="IPR036291">
    <property type="entry name" value="NAD(P)-bd_dom_sf"/>
</dbReference>
<dbReference type="InterPro" id="IPR000534">
    <property type="entry name" value="Semialdehyde_DH_NAD-bd"/>
</dbReference>
<dbReference type="InterPro" id="IPR012280">
    <property type="entry name" value="Semialdhyde_DH_dimer_dom"/>
</dbReference>
<dbReference type="NCBIfam" id="TIGR01296">
    <property type="entry name" value="asd_B"/>
    <property type="match status" value="1"/>
</dbReference>
<dbReference type="NCBIfam" id="NF004224">
    <property type="entry name" value="PRK05671.1"/>
    <property type="match status" value="1"/>
</dbReference>
<dbReference type="NCBIfam" id="NF011456">
    <property type="entry name" value="PRK14874.1"/>
    <property type="match status" value="1"/>
</dbReference>
<dbReference type="PANTHER" id="PTHR46278:SF2">
    <property type="entry name" value="ASPARTATE-SEMIALDEHYDE DEHYDROGENASE"/>
    <property type="match status" value="1"/>
</dbReference>
<dbReference type="PANTHER" id="PTHR46278">
    <property type="entry name" value="DEHYDROGENASE, PUTATIVE-RELATED"/>
    <property type="match status" value="1"/>
</dbReference>
<dbReference type="Pfam" id="PF01118">
    <property type="entry name" value="Semialdhyde_dh"/>
    <property type="match status" value="1"/>
</dbReference>
<dbReference type="Pfam" id="PF02774">
    <property type="entry name" value="Semialdhyde_dhC"/>
    <property type="match status" value="1"/>
</dbReference>
<dbReference type="PIRSF" id="PIRSF000148">
    <property type="entry name" value="ASA_dh"/>
    <property type="match status" value="1"/>
</dbReference>
<dbReference type="SMART" id="SM00859">
    <property type="entry name" value="Semialdhyde_dh"/>
    <property type="match status" value="1"/>
</dbReference>
<dbReference type="SUPFAM" id="SSF55347">
    <property type="entry name" value="Glyceraldehyde-3-phosphate dehydrogenase-like, C-terminal domain"/>
    <property type="match status" value="1"/>
</dbReference>
<dbReference type="SUPFAM" id="SSF51735">
    <property type="entry name" value="NAD(P)-binding Rossmann-fold domains"/>
    <property type="match status" value="1"/>
</dbReference>
<feature type="chain" id="PRO_0000280937" description="Aspartate-semialdehyde dehydrogenase">
    <location>
        <begin position="1"/>
        <end position="338"/>
    </location>
</feature>
<feature type="active site" description="Acyl-thioester intermediate" evidence="1">
    <location>
        <position position="132"/>
    </location>
</feature>
<feature type="active site" description="Proton acceptor" evidence="1">
    <location>
        <position position="244"/>
    </location>
</feature>
<feature type="binding site" evidence="1">
    <location>
        <begin position="13"/>
        <end position="16"/>
    </location>
    <ligand>
        <name>NADP(+)</name>
        <dbReference type="ChEBI" id="CHEBI:58349"/>
    </ligand>
</feature>
<feature type="binding site" evidence="1">
    <location>
        <begin position="41"/>
        <end position="42"/>
    </location>
    <ligand>
        <name>NADP(+)</name>
        <dbReference type="ChEBI" id="CHEBI:58349"/>
    </ligand>
</feature>
<feature type="binding site" evidence="1">
    <location>
        <position position="101"/>
    </location>
    <ligand>
        <name>phosphate</name>
        <dbReference type="ChEBI" id="CHEBI:43474"/>
    </ligand>
</feature>
<feature type="binding site" evidence="1">
    <location>
        <position position="159"/>
    </location>
    <ligand>
        <name>substrate</name>
    </ligand>
</feature>
<feature type="binding site" evidence="1">
    <location>
        <begin position="162"/>
        <end position="163"/>
    </location>
    <ligand>
        <name>NADP(+)</name>
        <dbReference type="ChEBI" id="CHEBI:58349"/>
    </ligand>
</feature>
<feature type="binding site" evidence="1">
    <location>
        <position position="216"/>
    </location>
    <ligand>
        <name>phosphate</name>
        <dbReference type="ChEBI" id="CHEBI:43474"/>
    </ligand>
</feature>
<feature type="binding site" evidence="1">
    <location>
        <position position="237"/>
    </location>
    <ligand>
        <name>substrate</name>
    </ligand>
</feature>
<feature type="binding site" evidence="1">
    <location>
        <position position="317"/>
    </location>
    <ligand>
        <name>NADP(+)</name>
        <dbReference type="ChEBI" id="CHEBI:58349"/>
    </ligand>
</feature>
<sequence>MTKKYNIAVIGATGNVGRETLNILAERNFPINKIYAVASNNSIGKKVSFGEQVLQISSLDDLDFEEIDIAFFSAGSEVSKKFIPIAIVKNCMVIDKSSFFRLSEDIPLIVPEANLSTLKDFAIKNIISNPNCIAIPLAVVLKPLDNEISIKRVVISTYQSVSGAGKAGMDELYDQTKSKYIFEEKSPNIFPKQIAFNLFPHIGDLNKDGYTSEESKIALELQKIIGDHLKVSVTSVRVPVFVGHSISVNIEFSSKVDAKEVEEILEDADGVVMISQTKDLAYISPTEVVGEDAVYVSRIRDDESKENAINLWITCDNLRKGAALNSVQIAEELIKTYL</sequence>
<name>DHAS_RICBR</name>
<evidence type="ECO:0000255" key="1">
    <source>
        <dbReference type="HAMAP-Rule" id="MF_02121"/>
    </source>
</evidence>
<proteinExistence type="inferred from homology"/>